<name>ETS1A_CHICK</name>
<evidence type="ECO:0000250" key="1">
    <source>
        <dbReference type="UniProtKB" id="P14921"/>
    </source>
</evidence>
<evidence type="ECO:0000250" key="2">
    <source>
        <dbReference type="UniProtKB" id="P27577"/>
    </source>
</evidence>
<evidence type="ECO:0000255" key="3">
    <source>
        <dbReference type="PROSITE-ProRule" id="PRU00237"/>
    </source>
</evidence>
<evidence type="ECO:0000255" key="4">
    <source>
        <dbReference type="PROSITE-ProRule" id="PRU00762"/>
    </source>
</evidence>
<evidence type="ECO:0000305" key="5"/>
<protein>
    <recommendedName>
        <fullName>Transforming protein p54/c-ets-1</fullName>
    </recommendedName>
</protein>
<comment type="function">
    <text evidence="1">Transcription factor. Directly controls the expression of cytokine and chemokine genes in a wide variety of different cellular contexts.</text>
</comment>
<comment type="activity regulation">
    <text evidence="2">Autoinhibited by a module composed of four alpha helices (HI-1, HI-2, H4, and H5) that flank the DNA-binding ETS domain, reducing the affinity for DNA.</text>
</comment>
<comment type="subunit">
    <text evidence="1">Binds DNA as a homodimer; homodimerization is required for transcription activation.</text>
</comment>
<comment type="subcellular location">
    <subcellularLocation>
        <location evidence="1">Nucleus</location>
    </subcellularLocation>
    <subcellularLocation>
        <location evidence="1">Cytoplasm</location>
    </subcellularLocation>
</comment>
<comment type="alternative products">
    <event type="alternative promoter"/>
    <isoform>
        <id>P13474-1</id>
        <name>p54</name>
        <sequence type="displayed"/>
    </isoform>
    <isoform>
        <id>P15062-1</id>
        <name>p68</name>
        <sequence type="external"/>
    </isoform>
</comment>
<comment type="similarity">
    <text evidence="5">Belongs to the ETS family.</text>
</comment>
<reference key="1">
    <citation type="journal article" date="1988" name="Oncogene Res.">
        <title>Cloning and expression of chicken p54c-ets cDNAs: the first p54c-ets coding exon is located into the 40.0 kbp genomic domain unrelated to v-ets.</title>
        <authorList>
            <person name="Duterque-Coquillaud M."/>
            <person name="Leprince D."/>
            <person name="Flourens A."/>
            <person name="Henry C."/>
            <person name="Ghysdael J."/>
            <person name="Debuire B."/>
            <person name="Stehelin D."/>
        </authorList>
    </citation>
    <scope>NUCLEOTIDE SEQUENCE [MRNA]</scope>
    <source>
        <tissue>Spleen</tissue>
    </source>
</reference>
<reference key="2">
    <citation type="journal article" date="1988" name="Oncogene Res.">
        <title>Complementary DNA clones of chicken proto-oncogene c-ets: sequence divergence from the viral oncogene v-ets.</title>
        <authorList>
            <person name="Chen J.H."/>
        </authorList>
    </citation>
    <scope>NUCLEOTIDE SEQUENCE [MRNA]</scope>
    <source>
        <tissue>Spleen</tissue>
    </source>
</reference>
<reference key="3">
    <citation type="journal article" date="1988" name="Virology">
        <title>A unique amino-terminal sequence predicted for the chicken proto-ets protein.</title>
        <authorList>
            <person name="Watson D.K."/>
            <person name="McWilliams M.J."/>
            <person name="Papas T.S."/>
        </authorList>
    </citation>
    <scope>NUCLEOTIDE SEQUENCE [MRNA]</scope>
</reference>
<reference key="4">
    <citation type="journal article" date="1993" name="Gene Expr.">
        <title>The two functionally distinct amino termini of chicken c-ets-1 products arise from alternative promoter usage.</title>
        <authorList>
            <person name="Crepieux P."/>
            <person name="Leprince D."/>
            <person name="Flourens A."/>
            <person name="Albagli O."/>
            <person name="Ferreira E."/>
            <person name="Stehelin D."/>
        </authorList>
    </citation>
    <scope>ALTERNATIVE PROMOTER USAGE</scope>
</reference>
<keyword id="KW-0877">Alternative promoter usage</keyword>
<keyword id="KW-0963">Cytoplasm</keyword>
<keyword id="KW-0238">DNA-binding</keyword>
<keyword id="KW-0539">Nucleus</keyword>
<keyword id="KW-0597">Phosphoprotein</keyword>
<keyword id="KW-0656">Proto-oncogene</keyword>
<keyword id="KW-1185">Reference proteome</keyword>
<keyword id="KW-0804">Transcription</keyword>
<keyword id="KW-0805">Transcription regulation</keyword>
<dbReference type="EMBL" id="M22462">
    <property type="protein sequence ID" value="AAA48764.1"/>
    <property type="molecule type" value="mRNA"/>
</dbReference>
<dbReference type="EMBL" id="X13026">
    <property type="protein sequence ID" value="CAA31441.1"/>
    <property type="molecule type" value="mRNA"/>
</dbReference>
<dbReference type="EMBL" id="X13027">
    <property type="protein sequence ID" value="CAA31442.1"/>
    <property type="molecule type" value="mRNA"/>
</dbReference>
<dbReference type="PIR" id="A31285">
    <property type="entry name" value="TVCHTE"/>
</dbReference>
<dbReference type="RefSeq" id="NP_990629.2">
    <property type="nucleotide sequence ID" value="NM_205298.2"/>
</dbReference>
<dbReference type="SMR" id="P13474"/>
<dbReference type="FunCoup" id="P13474">
    <property type="interactions" value="258"/>
</dbReference>
<dbReference type="iPTMnet" id="P13474"/>
<dbReference type="GeneID" id="396235"/>
<dbReference type="KEGG" id="gga:396235"/>
<dbReference type="CTD" id="2113"/>
<dbReference type="VEuPathDB" id="HostDB:geneid_396235"/>
<dbReference type="InParanoid" id="P13474"/>
<dbReference type="OrthoDB" id="10067219at2759"/>
<dbReference type="Proteomes" id="UP000000539">
    <property type="component" value="Unassembled WGS sequence"/>
</dbReference>
<dbReference type="GO" id="GO:0005737">
    <property type="term" value="C:cytoplasm"/>
    <property type="evidence" value="ECO:0007669"/>
    <property type="project" value="UniProtKB-SubCell"/>
</dbReference>
<dbReference type="GO" id="GO:0005634">
    <property type="term" value="C:nucleus"/>
    <property type="evidence" value="ECO:0007669"/>
    <property type="project" value="UniProtKB-SubCell"/>
</dbReference>
<dbReference type="GO" id="GO:0003700">
    <property type="term" value="F:DNA-binding transcription factor activity"/>
    <property type="evidence" value="ECO:0007669"/>
    <property type="project" value="InterPro"/>
</dbReference>
<dbReference type="GO" id="GO:0043565">
    <property type="term" value="F:sequence-specific DNA binding"/>
    <property type="evidence" value="ECO:0007669"/>
    <property type="project" value="InterPro"/>
</dbReference>
<dbReference type="GO" id="GO:0010595">
    <property type="term" value="P:positive regulation of endothelial cell migration"/>
    <property type="evidence" value="ECO:0000250"/>
    <property type="project" value="UniProtKB"/>
</dbReference>
<dbReference type="GO" id="GO:0045765">
    <property type="term" value="P:regulation of angiogenesis"/>
    <property type="evidence" value="ECO:0000250"/>
    <property type="project" value="UniProtKB"/>
</dbReference>
<dbReference type="GO" id="GO:0006357">
    <property type="term" value="P:regulation of transcription by RNA polymerase II"/>
    <property type="evidence" value="ECO:0007669"/>
    <property type="project" value="InterPro"/>
</dbReference>
<dbReference type="CDD" id="cd08542">
    <property type="entry name" value="SAM_PNT-ETS-1"/>
    <property type="match status" value="1"/>
</dbReference>
<dbReference type="FunFam" id="1.10.10.10:FF:000097">
    <property type="entry name" value="Protein c-ets-1 isoform 1"/>
    <property type="match status" value="1"/>
</dbReference>
<dbReference type="FunFam" id="1.10.150.50:FF:000014">
    <property type="entry name" value="Protein c-ets-1 isoform 1"/>
    <property type="match status" value="1"/>
</dbReference>
<dbReference type="Gene3D" id="1.10.150.50">
    <property type="entry name" value="Transcription Factor, Ets-1"/>
    <property type="match status" value="1"/>
</dbReference>
<dbReference type="Gene3D" id="1.10.10.10">
    <property type="entry name" value="Winged helix-like DNA-binding domain superfamily/Winged helix DNA-binding domain"/>
    <property type="match status" value="1"/>
</dbReference>
<dbReference type="InterPro" id="IPR045688">
    <property type="entry name" value="Ets1_N_flank"/>
</dbReference>
<dbReference type="InterPro" id="IPR000418">
    <property type="entry name" value="Ets_dom"/>
</dbReference>
<dbReference type="InterPro" id="IPR046328">
    <property type="entry name" value="ETS_fam"/>
</dbReference>
<dbReference type="InterPro" id="IPR003118">
    <property type="entry name" value="Pointed_dom"/>
</dbReference>
<dbReference type="InterPro" id="IPR013761">
    <property type="entry name" value="SAM/pointed_sf"/>
</dbReference>
<dbReference type="InterPro" id="IPR041886">
    <property type="entry name" value="SAM_PNT-ETS-1"/>
</dbReference>
<dbReference type="InterPro" id="IPR016311">
    <property type="entry name" value="Transform_prot_C-ets"/>
</dbReference>
<dbReference type="InterPro" id="IPR036388">
    <property type="entry name" value="WH-like_DNA-bd_sf"/>
</dbReference>
<dbReference type="InterPro" id="IPR036390">
    <property type="entry name" value="WH_DNA-bd_sf"/>
</dbReference>
<dbReference type="PANTHER" id="PTHR11849">
    <property type="entry name" value="ETS"/>
    <property type="match status" value="1"/>
</dbReference>
<dbReference type="PANTHER" id="PTHR11849:SF314">
    <property type="entry name" value="PROTEIN C-ETS-1"/>
    <property type="match status" value="1"/>
</dbReference>
<dbReference type="Pfam" id="PF00178">
    <property type="entry name" value="Ets"/>
    <property type="match status" value="1"/>
</dbReference>
<dbReference type="Pfam" id="PF19525">
    <property type="entry name" value="Ets1_N_flank"/>
    <property type="match status" value="1"/>
</dbReference>
<dbReference type="Pfam" id="PF02198">
    <property type="entry name" value="SAM_PNT"/>
    <property type="match status" value="1"/>
</dbReference>
<dbReference type="PIRSF" id="PIRSF001698">
    <property type="entry name" value="Transforming_factor_C-ets"/>
    <property type="match status" value="1"/>
</dbReference>
<dbReference type="PRINTS" id="PR00454">
    <property type="entry name" value="ETSDOMAIN"/>
</dbReference>
<dbReference type="SMART" id="SM00413">
    <property type="entry name" value="ETS"/>
    <property type="match status" value="1"/>
</dbReference>
<dbReference type="SMART" id="SM00251">
    <property type="entry name" value="SAM_PNT"/>
    <property type="match status" value="1"/>
</dbReference>
<dbReference type="SUPFAM" id="SSF47769">
    <property type="entry name" value="SAM/Pointed domain"/>
    <property type="match status" value="1"/>
</dbReference>
<dbReference type="SUPFAM" id="SSF46785">
    <property type="entry name" value="Winged helix' DNA-binding domain"/>
    <property type="match status" value="1"/>
</dbReference>
<dbReference type="PROSITE" id="PS00345">
    <property type="entry name" value="ETS_DOMAIN_1"/>
    <property type="match status" value="1"/>
</dbReference>
<dbReference type="PROSITE" id="PS00346">
    <property type="entry name" value="ETS_DOMAIN_2"/>
    <property type="match status" value="1"/>
</dbReference>
<dbReference type="PROSITE" id="PS50061">
    <property type="entry name" value="ETS_DOMAIN_3"/>
    <property type="match status" value="1"/>
</dbReference>
<dbReference type="PROSITE" id="PS51433">
    <property type="entry name" value="PNT"/>
    <property type="match status" value="1"/>
</dbReference>
<feature type="chain" id="PRO_0000204072" description="Transforming protein p54/c-ets-1">
    <location>
        <begin position="1"/>
        <end position="441"/>
    </location>
</feature>
<feature type="domain" description="PNT" evidence="4">
    <location>
        <begin position="51"/>
        <end position="136"/>
    </location>
</feature>
<feature type="DNA-binding region" description="ETS" evidence="3">
    <location>
        <begin position="335"/>
        <end position="415"/>
    </location>
</feature>
<feature type="region of interest" description="Activation domain; required for transcription activation" evidence="1">
    <location>
        <begin position="130"/>
        <end position="243"/>
    </location>
</feature>
<feature type="region of interest" description="Helix HI-1" evidence="2">
    <location>
        <begin position="304"/>
        <end position="312"/>
    </location>
</feature>
<feature type="region of interest" description="Helix HI-2" evidence="2">
    <location>
        <begin position="323"/>
        <end position="330"/>
    </location>
</feature>
<feature type="region of interest" description="Helix H4" evidence="2">
    <location>
        <begin position="418"/>
        <end position="422"/>
    </location>
</feature>
<feature type="region of interest" description="Helix H5" evidence="2">
    <location>
        <begin position="426"/>
        <end position="432"/>
    </location>
</feature>
<feature type="sequence conflict" description="In Ref. 3; AAA48764." evidence="5" ref="3">
    <original>R</original>
    <variation>A</variation>
    <location>
        <position position="117"/>
    </location>
</feature>
<proteinExistence type="evidence at transcript level"/>
<accession>P13474</accession>
<gene>
    <name type="primary">ETS1</name>
</gene>
<sequence>MKAAVDLKPTLTIIKTEKVDIDLFPSPDMECADVPLLTPSSKEMMSQALKATFSGFAKEQQRLGIPKDPQQWTETHVRDWVMWAVNEFSLKGVDFQKFCMNGAALCALGKECFLELRPDFVGDILWEHLEILQKEEAKPYPANGVNAAYPESRYTSDYFISYGIEHAQCVPPSEFSEPSFITESYQTLHPISSEELLSLKYENDYPSVILRDPVQTDSLQTDYFTIKQEVVTPDNMCMGRASRGKLGGQDSFESIESYDSCDRLTQSWSSQSSFQSLQRVPSYDSFDSEDYPAALPNHKPKGTFKDYVRDRADMNKDKPVIPAAALAGYTGSGPIQLWQFLLELLTDKSCQSFISWTGDGWEFKLSDPDEVARRWGKRKNKPKMNYEKLSRGLRYYYDKNIIHKTAGKRYVYRFVCDLQSLLGYTPEELHAMLDVKPDADE</sequence>
<organism>
    <name type="scientific">Gallus gallus</name>
    <name type="common">Chicken</name>
    <dbReference type="NCBI Taxonomy" id="9031"/>
    <lineage>
        <taxon>Eukaryota</taxon>
        <taxon>Metazoa</taxon>
        <taxon>Chordata</taxon>
        <taxon>Craniata</taxon>
        <taxon>Vertebrata</taxon>
        <taxon>Euteleostomi</taxon>
        <taxon>Archelosauria</taxon>
        <taxon>Archosauria</taxon>
        <taxon>Dinosauria</taxon>
        <taxon>Saurischia</taxon>
        <taxon>Theropoda</taxon>
        <taxon>Coelurosauria</taxon>
        <taxon>Aves</taxon>
        <taxon>Neognathae</taxon>
        <taxon>Galloanserae</taxon>
        <taxon>Galliformes</taxon>
        <taxon>Phasianidae</taxon>
        <taxon>Phasianinae</taxon>
        <taxon>Gallus</taxon>
    </lineage>
</organism>